<keyword id="KW-0687">Ribonucleoprotein</keyword>
<keyword id="KW-0689">Ribosomal protein</keyword>
<keyword id="KW-0694">RNA-binding</keyword>
<keyword id="KW-0699">rRNA-binding</keyword>
<reference key="1">
    <citation type="submission" date="2008-03" db="EMBL/GenBank/DDBJ databases">
        <title>Complete sequence of chromosome of Methylobacterium radiotolerans JCM 2831.</title>
        <authorList>
            <consortium name="US DOE Joint Genome Institute"/>
            <person name="Copeland A."/>
            <person name="Lucas S."/>
            <person name="Lapidus A."/>
            <person name="Glavina del Rio T."/>
            <person name="Dalin E."/>
            <person name="Tice H."/>
            <person name="Bruce D."/>
            <person name="Goodwin L."/>
            <person name="Pitluck S."/>
            <person name="Kiss H."/>
            <person name="Brettin T."/>
            <person name="Detter J.C."/>
            <person name="Han C."/>
            <person name="Kuske C.R."/>
            <person name="Schmutz J."/>
            <person name="Larimer F."/>
            <person name="Land M."/>
            <person name="Hauser L."/>
            <person name="Kyrpides N."/>
            <person name="Mikhailova N."/>
            <person name="Marx C.J."/>
            <person name="Richardson P."/>
        </authorList>
    </citation>
    <scope>NUCLEOTIDE SEQUENCE [LARGE SCALE GENOMIC DNA]</scope>
    <source>
        <strain>ATCC 27329 / DSM 1819 / JCM 2831 / NBRC 15690 / NCIMB 10815 / 0-1</strain>
    </source>
</reference>
<evidence type="ECO:0000255" key="1">
    <source>
        <dbReference type="HAMAP-Rule" id="MF_00500"/>
    </source>
</evidence>
<evidence type="ECO:0000256" key="2">
    <source>
        <dbReference type="SAM" id="MobiDB-lite"/>
    </source>
</evidence>
<evidence type="ECO:0000305" key="3"/>
<proteinExistence type="inferred from homology"/>
<accession>B1M565</accession>
<dbReference type="EMBL" id="CP001001">
    <property type="protein sequence ID" value="ACB22028.1"/>
    <property type="molecule type" value="Genomic_DNA"/>
</dbReference>
<dbReference type="RefSeq" id="WP_012317029.1">
    <property type="nucleotide sequence ID" value="NC_010505.1"/>
</dbReference>
<dbReference type="SMR" id="B1M565"/>
<dbReference type="STRING" id="426355.Mrad2831_0001"/>
<dbReference type="GeneID" id="6141850"/>
<dbReference type="KEGG" id="mrd:Mrad2831_0001"/>
<dbReference type="eggNOG" id="COG0268">
    <property type="taxonomic scope" value="Bacteria"/>
</dbReference>
<dbReference type="HOGENOM" id="CLU_160655_3_0_5"/>
<dbReference type="OrthoDB" id="9807974at2"/>
<dbReference type="Proteomes" id="UP000006589">
    <property type="component" value="Chromosome"/>
</dbReference>
<dbReference type="GO" id="GO:0005829">
    <property type="term" value="C:cytosol"/>
    <property type="evidence" value="ECO:0007669"/>
    <property type="project" value="TreeGrafter"/>
</dbReference>
<dbReference type="GO" id="GO:0015935">
    <property type="term" value="C:small ribosomal subunit"/>
    <property type="evidence" value="ECO:0007669"/>
    <property type="project" value="TreeGrafter"/>
</dbReference>
<dbReference type="GO" id="GO:0070181">
    <property type="term" value="F:small ribosomal subunit rRNA binding"/>
    <property type="evidence" value="ECO:0007669"/>
    <property type="project" value="TreeGrafter"/>
</dbReference>
<dbReference type="GO" id="GO:0003735">
    <property type="term" value="F:structural constituent of ribosome"/>
    <property type="evidence" value="ECO:0007669"/>
    <property type="project" value="InterPro"/>
</dbReference>
<dbReference type="GO" id="GO:0006412">
    <property type="term" value="P:translation"/>
    <property type="evidence" value="ECO:0007669"/>
    <property type="project" value="UniProtKB-UniRule"/>
</dbReference>
<dbReference type="Gene3D" id="1.20.58.110">
    <property type="entry name" value="Ribosomal protein S20"/>
    <property type="match status" value="1"/>
</dbReference>
<dbReference type="HAMAP" id="MF_00500">
    <property type="entry name" value="Ribosomal_bS20"/>
    <property type="match status" value="1"/>
</dbReference>
<dbReference type="InterPro" id="IPR002583">
    <property type="entry name" value="Ribosomal_bS20"/>
</dbReference>
<dbReference type="InterPro" id="IPR036510">
    <property type="entry name" value="Ribosomal_bS20_sf"/>
</dbReference>
<dbReference type="NCBIfam" id="TIGR00029">
    <property type="entry name" value="S20"/>
    <property type="match status" value="1"/>
</dbReference>
<dbReference type="PANTHER" id="PTHR33398">
    <property type="entry name" value="30S RIBOSOMAL PROTEIN S20"/>
    <property type="match status" value="1"/>
</dbReference>
<dbReference type="PANTHER" id="PTHR33398:SF1">
    <property type="entry name" value="SMALL RIBOSOMAL SUBUNIT PROTEIN BS20C"/>
    <property type="match status" value="1"/>
</dbReference>
<dbReference type="Pfam" id="PF01649">
    <property type="entry name" value="Ribosomal_S20p"/>
    <property type="match status" value="1"/>
</dbReference>
<dbReference type="SUPFAM" id="SSF46992">
    <property type="entry name" value="Ribosomal protein S20"/>
    <property type="match status" value="1"/>
</dbReference>
<organism>
    <name type="scientific">Methylobacterium radiotolerans (strain ATCC 27329 / DSM 1819 / JCM 2831 / NBRC 15690 / NCIMB 10815 / 0-1)</name>
    <dbReference type="NCBI Taxonomy" id="426355"/>
    <lineage>
        <taxon>Bacteria</taxon>
        <taxon>Pseudomonadati</taxon>
        <taxon>Pseudomonadota</taxon>
        <taxon>Alphaproteobacteria</taxon>
        <taxon>Hyphomicrobiales</taxon>
        <taxon>Methylobacteriaceae</taxon>
        <taxon>Methylobacterium</taxon>
    </lineage>
</organism>
<comment type="function">
    <text evidence="1">Binds directly to 16S ribosomal RNA.</text>
</comment>
<comment type="similarity">
    <text evidence="1">Belongs to the bacterial ribosomal protein bS20 family.</text>
</comment>
<feature type="chain" id="PRO_1000126477" description="Small ribosomal subunit protein bS20">
    <location>
        <begin position="1"/>
        <end position="88"/>
    </location>
</feature>
<feature type="region of interest" description="Disordered" evidence="2">
    <location>
        <begin position="1"/>
        <end position="27"/>
    </location>
</feature>
<gene>
    <name evidence="1" type="primary">rpsT</name>
    <name type="ordered locus">Mrad2831_0001</name>
</gene>
<name>RS20_METRJ</name>
<protein>
    <recommendedName>
        <fullName evidence="1">Small ribosomal subunit protein bS20</fullName>
    </recommendedName>
    <alternativeName>
        <fullName evidence="3">30S ribosomal protein S20</fullName>
    </alternativeName>
</protein>
<sequence>MANTASAKKMTRKIAKRTAINRSRRSRMRTFVRKVEEAIASGNQQDALAALRAAEPEMMRAAQHGIVHKNNASRKVSRLAARVKALAA</sequence>